<keyword id="KW-0150">Chloroplast</keyword>
<keyword id="KW-0472">Membrane</keyword>
<keyword id="KW-0602">Photosynthesis</keyword>
<keyword id="KW-0604">Photosystem II</keyword>
<keyword id="KW-0934">Plastid</keyword>
<keyword id="KW-0793">Thylakoid</keyword>
<keyword id="KW-0812">Transmembrane</keyword>
<keyword id="KW-1133">Transmembrane helix</keyword>
<sequence length="35" mass="4105">MEALVYTFLLVSTLGIIFFAIFFREPPKVPTKRMK</sequence>
<organism>
    <name type="scientific">Drimys winteri</name>
    <name type="common">Winter's bark</name>
    <name type="synonym">Drimys chilensis</name>
    <dbReference type="NCBI Taxonomy" id="3419"/>
    <lineage>
        <taxon>Eukaryota</taxon>
        <taxon>Viridiplantae</taxon>
        <taxon>Streptophyta</taxon>
        <taxon>Embryophyta</taxon>
        <taxon>Tracheophyta</taxon>
        <taxon>Spermatophyta</taxon>
        <taxon>Magnoliopsida</taxon>
        <taxon>Magnoliidae</taxon>
        <taxon>Canellales</taxon>
        <taxon>Winteraceae</taxon>
        <taxon>Drimys</taxon>
    </lineage>
</organism>
<comment type="function">
    <text evidence="1">Found at the monomer-monomer interface of the photosystem II (PS II) dimer, plays a role in assembly and dimerization of PSII. PSII is a light-driven water plastoquinone oxidoreductase, using light energy to abstract electrons from H(2)O, generating a proton gradient subsequently used for ATP formation.</text>
</comment>
<comment type="subunit">
    <text evidence="1">PSII is composed of 1 copy each of membrane proteins PsbA, PsbB, PsbC, PsbD, PsbE, PsbF, PsbH, PsbI, PsbJ, PsbK, PsbL, PsbM, PsbT, PsbY, PsbZ, Psb30/Ycf12, at least 3 peripheral proteins of the oxygen-evolving complex and a large number of cofactors. It forms dimeric complexes.</text>
</comment>
<comment type="subcellular location">
    <subcellularLocation>
        <location evidence="1">Plastid</location>
        <location evidence="1">Chloroplast thylakoid membrane</location>
        <topology evidence="1">Single-pass membrane protein</topology>
    </subcellularLocation>
</comment>
<comment type="similarity">
    <text evidence="1">Belongs to the PsbT family.</text>
</comment>
<geneLocation type="chloroplast"/>
<accession>Q9GF90</accession>
<name>PSBT_DRIWI</name>
<evidence type="ECO:0000255" key="1">
    <source>
        <dbReference type="HAMAP-Rule" id="MF_00808"/>
    </source>
</evidence>
<dbReference type="EMBL" id="AF123850">
    <property type="protein sequence ID" value="AAG26278.1"/>
    <property type="molecule type" value="Genomic_DNA"/>
</dbReference>
<dbReference type="SMR" id="Q9GF90"/>
<dbReference type="GO" id="GO:0009535">
    <property type="term" value="C:chloroplast thylakoid membrane"/>
    <property type="evidence" value="ECO:0007669"/>
    <property type="project" value="UniProtKB-SubCell"/>
</dbReference>
<dbReference type="GO" id="GO:0009539">
    <property type="term" value="C:photosystem II reaction center"/>
    <property type="evidence" value="ECO:0007669"/>
    <property type="project" value="InterPro"/>
</dbReference>
<dbReference type="GO" id="GO:0015979">
    <property type="term" value="P:photosynthesis"/>
    <property type="evidence" value="ECO:0007669"/>
    <property type="project" value="UniProtKB-UniRule"/>
</dbReference>
<dbReference type="HAMAP" id="MF_00808">
    <property type="entry name" value="PSII_PsbT"/>
    <property type="match status" value="1"/>
</dbReference>
<dbReference type="InterPro" id="IPR001743">
    <property type="entry name" value="PSII_PsbT"/>
</dbReference>
<dbReference type="InterPro" id="IPR037268">
    <property type="entry name" value="PSII_PsbT_sf"/>
</dbReference>
<dbReference type="PANTHER" id="PTHR36411">
    <property type="match status" value="1"/>
</dbReference>
<dbReference type="PANTHER" id="PTHR36411:SF2">
    <property type="entry name" value="PHOTOSYSTEM II REACTION CENTER PROTEIN T"/>
    <property type="match status" value="1"/>
</dbReference>
<dbReference type="Pfam" id="PF01405">
    <property type="entry name" value="PsbT"/>
    <property type="match status" value="1"/>
</dbReference>
<dbReference type="SUPFAM" id="SSF161029">
    <property type="entry name" value="Photosystem II reaction center protein T, PsbT"/>
    <property type="match status" value="1"/>
</dbReference>
<protein>
    <recommendedName>
        <fullName evidence="1">Photosystem II reaction center protein T</fullName>
        <shortName evidence="1">PSII-T</shortName>
    </recommendedName>
</protein>
<proteinExistence type="inferred from homology"/>
<reference key="1">
    <citation type="journal article" date="2000" name="Am. J. Bot.">
        <title>Utility of 17 chloroplast genes for inferring the phylogeny of the basal angiosperms.</title>
        <authorList>
            <person name="Graham S.W."/>
            <person name="Olmstead R.G."/>
        </authorList>
    </citation>
    <scope>NUCLEOTIDE SEQUENCE [GENOMIC DNA]</scope>
</reference>
<gene>
    <name evidence="1" type="primary">psbT</name>
</gene>
<feature type="chain" id="PRO_0000217928" description="Photosystem II reaction center protein T">
    <location>
        <begin position="1"/>
        <end position="35"/>
    </location>
</feature>
<feature type="transmembrane region" description="Helical" evidence="1">
    <location>
        <begin position="3"/>
        <end position="23"/>
    </location>
</feature>